<proteinExistence type="evidence at transcript level"/>
<gene>
    <name evidence="5" type="primary">VSR2</name>
    <name evidence="4" type="synonym">BP80C</name>
    <name evidence="4" type="synonym">ELP4</name>
    <name evidence="7" type="ordered locus">At2g30290</name>
    <name evidence="8" type="ORF">T9D9.10</name>
</gene>
<name>VSR2_ARATH</name>
<reference key="1">
    <citation type="journal article" date="1999" name="Nature">
        <title>Sequence and analysis of chromosome 2 of the plant Arabidopsis thaliana.</title>
        <authorList>
            <person name="Lin X."/>
            <person name="Kaul S."/>
            <person name="Rounsley S.D."/>
            <person name="Shea T.P."/>
            <person name="Benito M.-I."/>
            <person name="Town C.D."/>
            <person name="Fujii C.Y."/>
            <person name="Mason T.M."/>
            <person name="Bowman C.L."/>
            <person name="Barnstead M.E."/>
            <person name="Feldblyum T.V."/>
            <person name="Buell C.R."/>
            <person name="Ketchum K.A."/>
            <person name="Lee J.J."/>
            <person name="Ronning C.M."/>
            <person name="Koo H.L."/>
            <person name="Moffat K.S."/>
            <person name="Cronin L.A."/>
            <person name="Shen M."/>
            <person name="Pai G."/>
            <person name="Van Aken S."/>
            <person name="Umayam L."/>
            <person name="Tallon L.J."/>
            <person name="Gill J.E."/>
            <person name="Adams M.D."/>
            <person name="Carrera A.J."/>
            <person name="Creasy T.H."/>
            <person name="Goodman H.M."/>
            <person name="Somerville C.R."/>
            <person name="Copenhaver G.P."/>
            <person name="Preuss D."/>
            <person name="Nierman W.C."/>
            <person name="White O."/>
            <person name="Eisen J.A."/>
            <person name="Salzberg S.L."/>
            <person name="Fraser C.M."/>
            <person name="Venter J.C."/>
        </authorList>
    </citation>
    <scope>NUCLEOTIDE SEQUENCE [LARGE SCALE GENOMIC DNA]</scope>
    <source>
        <strain>cv. Columbia</strain>
    </source>
</reference>
<reference key="2">
    <citation type="journal article" date="2017" name="Plant J.">
        <title>Araport11: a complete reannotation of the Arabidopsis thaliana reference genome.</title>
        <authorList>
            <person name="Cheng C.Y."/>
            <person name="Krishnakumar V."/>
            <person name="Chan A.P."/>
            <person name="Thibaud-Nissen F."/>
            <person name="Schobel S."/>
            <person name="Town C.D."/>
        </authorList>
    </citation>
    <scope>GENOME REANNOTATION</scope>
    <source>
        <strain>cv. Columbia</strain>
    </source>
</reference>
<reference key="3">
    <citation type="journal article" date="2006" name="Plant Biotechnol. J.">
        <title>Simultaneous high-throughput recombinational cloning of open reading frames in closed and open configurations.</title>
        <authorList>
            <person name="Underwood B.A."/>
            <person name="Vanderhaeghen R."/>
            <person name="Whitford R."/>
            <person name="Town C.D."/>
            <person name="Hilson P."/>
        </authorList>
    </citation>
    <scope>NUCLEOTIDE SEQUENCE [LARGE SCALE MRNA]</scope>
    <source>
        <strain>cv. Columbia</strain>
    </source>
</reference>
<reference key="4">
    <citation type="journal article" date="2003" name="J. Exp. Bot.">
        <title>Seed germination is blocked in Arabidopsis putative vacuolar sorting receptor (atbp80) antisense transformants.</title>
        <authorList>
            <person name="Laval V."/>
            <person name="Masclaux F."/>
            <person name="Serin A."/>
            <person name="Carriere M."/>
            <person name="Roldan C."/>
            <person name="Devic M."/>
            <person name="Pont-Lezica R.F."/>
            <person name="Galaud J.-P."/>
        </authorList>
    </citation>
    <scope>TISSUE SPECIFICITY</scope>
</reference>
<reference key="5">
    <citation type="journal article" date="2003" name="Proc. Natl. Acad. Sci. U.S.A.">
        <title>Vacuolar sorting receptor for seed storage proteins in Arabidopsis thaliana.</title>
        <authorList>
            <person name="Shimada T."/>
            <person name="Fuji K."/>
            <person name="Tamura K."/>
            <person name="Kondo M."/>
            <person name="Nishimura M."/>
            <person name="Hara-Nishimura I."/>
        </authorList>
    </citation>
    <scope>NOMENCLATURE</scope>
</reference>
<accession>O22925</accession>
<accession>Q1PEY7</accession>
<sequence>MRTTNVWLVVIVWVTVGWSSCTGRFVVEKNNLRVTSPESIRGVYECALGNFGVPQYGGSMSGAVVYPKTNQKACKNFDDFEISFRSRVAGLPTFVLVDRGDCYFTLKAWNAQRAGAATILVADNRPEQLITMDAPEDETSDADYLQNITIPSALVSRSLGSAIKTAIAHGDPVHISLDWREALPHPNDRVAYELWTNSNDECGSKCDAQIRFLKRFKGAAQILEKGGYTRFTPHYITWYCPEAFLASRQCKTQCINGGRYCAPDPEQDFSRGYNGKDVIIQNLRQACFFRVTNESGKPWLWWDYVTDFAIRCPMKEEKYNKKCADQVIQSLGVDVKKIDKCIGDIDANAENPVLKEEQVAQVGKGSRGDVTILPTIVINNRQYRGKLQRSAVLKALCSGFRETTEPPICLTEDIETNECLQNNGGCWEDKTTNITACRDTFRGRVCQCPIVQGVKFLGDGYTHCEASGALRCGINNGGCWKQTQMGKTYSACRDDHSKGCKCPPGFIGDGLKECKDVNECEEKTACQCRDCKCKNTWGSYECSCSGSLLYIREHDICINRDARGDFSWGVIWIIIMGLGAAALGAYTVYKYRIRTYMDSEIRAIMAQYMPLDNNPNTQLSSQLEL</sequence>
<keyword id="KW-0025">Alternative splicing</keyword>
<keyword id="KW-0106">Calcium</keyword>
<keyword id="KW-0968">Cytoplasmic vesicle</keyword>
<keyword id="KW-1015">Disulfide bond</keyword>
<keyword id="KW-0245">EGF-like domain</keyword>
<keyword id="KW-0325">Glycoprotein</keyword>
<keyword id="KW-0333">Golgi apparatus</keyword>
<keyword id="KW-0472">Membrane</keyword>
<keyword id="KW-0653">Protein transport</keyword>
<keyword id="KW-1185">Reference proteome</keyword>
<keyword id="KW-0677">Repeat</keyword>
<keyword id="KW-0732">Signal</keyword>
<keyword id="KW-0812">Transmembrane</keyword>
<keyword id="KW-1133">Transmembrane helix</keyword>
<keyword id="KW-0813">Transport</keyword>
<comment type="function">
    <text evidence="1">Vacuolar-sorting receptor (VSR) involved in clathrin-coated vesicles sorting from Golgi apparatus to vacuoles.</text>
</comment>
<comment type="subcellular location">
    <subcellularLocation>
        <location evidence="1">Membrane</location>
        <topology evidence="1">Single-pass type I membrane protein</topology>
    </subcellularLocation>
    <subcellularLocation>
        <location evidence="1">Golgi apparatus membrane</location>
        <topology evidence="1">Single-pass type I membrane protein</topology>
    </subcellularLocation>
    <subcellularLocation>
        <location evidence="1">Cytoplasmic vesicle</location>
        <location evidence="1">Clathrin-coated vesicle membrane</location>
        <topology evidence="1">Single-pass type I membrane protein</topology>
    </subcellularLocation>
    <subcellularLocation>
        <location evidence="1">Prevacuolar compartment membrane</location>
        <topology evidence="1">Single-pass type I membrane protein</topology>
    </subcellularLocation>
</comment>
<comment type="alternative products">
    <event type="alternative splicing"/>
    <isoform>
        <id>O22925-1</id>
        <name>1</name>
        <sequence type="displayed"/>
    </isoform>
    <text>A number of isoforms are produced. According to EST sequences.</text>
</comment>
<comment type="tissue specificity">
    <text evidence="3">Expressed only in flowers.</text>
</comment>
<comment type="domain">
    <text evidence="1">The tyrosine-based internalization signal may be involved in trafficking at the TGN.</text>
</comment>
<comment type="similarity">
    <text evidence="6">Belongs to the VSR (BP-80) family.</text>
</comment>
<dbReference type="EMBL" id="AC002338">
    <property type="protein sequence ID" value="AAC16948.1"/>
    <property type="molecule type" value="Genomic_DNA"/>
</dbReference>
<dbReference type="EMBL" id="CP002685">
    <property type="protein sequence ID" value="AEC08366.1"/>
    <property type="molecule type" value="Genomic_DNA"/>
</dbReference>
<dbReference type="EMBL" id="DQ446580">
    <property type="protein sequence ID" value="ABE65874.1"/>
    <property type="molecule type" value="mRNA"/>
</dbReference>
<dbReference type="PIR" id="F84706">
    <property type="entry name" value="F84706"/>
</dbReference>
<dbReference type="RefSeq" id="NP_180588.1">
    <molecule id="O22925-1"/>
    <property type="nucleotide sequence ID" value="NM_128582.2"/>
</dbReference>
<dbReference type="SMR" id="O22925"/>
<dbReference type="FunCoup" id="O22925">
    <property type="interactions" value="4"/>
</dbReference>
<dbReference type="STRING" id="3702.O22925"/>
<dbReference type="GlyCosmos" id="O22925">
    <property type="glycosylation" value="3 sites, No reported glycans"/>
</dbReference>
<dbReference type="GlyGen" id="O22925">
    <property type="glycosylation" value="4 sites"/>
</dbReference>
<dbReference type="iPTMnet" id="O22925"/>
<dbReference type="PaxDb" id="3702-AT2G30290.2"/>
<dbReference type="ProteomicsDB" id="242633">
    <molecule id="O22925-1"/>
</dbReference>
<dbReference type="EnsemblPlants" id="AT2G30290.1">
    <molecule id="O22925-1"/>
    <property type="protein sequence ID" value="AT2G30290.1"/>
    <property type="gene ID" value="AT2G30290"/>
</dbReference>
<dbReference type="GeneID" id="817579"/>
<dbReference type="Gramene" id="AT2G30290.1">
    <molecule id="O22925-1"/>
    <property type="protein sequence ID" value="AT2G30290.1"/>
    <property type="gene ID" value="AT2G30290"/>
</dbReference>
<dbReference type="KEGG" id="ath:AT2G30290"/>
<dbReference type="Araport" id="AT2G30290"/>
<dbReference type="TAIR" id="AT2G30290">
    <property type="gene designation" value="VSR2"/>
</dbReference>
<dbReference type="eggNOG" id="ENOG502QSX2">
    <property type="taxonomic scope" value="Eukaryota"/>
</dbReference>
<dbReference type="HOGENOM" id="CLU_031082_1_0_1"/>
<dbReference type="InParanoid" id="O22925"/>
<dbReference type="OMA" id="RCPMKHE"/>
<dbReference type="PhylomeDB" id="O22925"/>
<dbReference type="PRO" id="PR:O22925"/>
<dbReference type="Proteomes" id="UP000006548">
    <property type="component" value="Chromosome 2"/>
</dbReference>
<dbReference type="ExpressionAtlas" id="O22925">
    <property type="expression patterns" value="baseline and differential"/>
</dbReference>
<dbReference type="GO" id="GO:0030665">
    <property type="term" value="C:clathrin-coated vesicle membrane"/>
    <property type="evidence" value="ECO:0007669"/>
    <property type="project" value="UniProtKB-SubCell"/>
</dbReference>
<dbReference type="GO" id="GO:0000139">
    <property type="term" value="C:Golgi membrane"/>
    <property type="evidence" value="ECO:0007669"/>
    <property type="project" value="UniProtKB-SubCell"/>
</dbReference>
<dbReference type="GO" id="GO:0005509">
    <property type="term" value="F:calcium ion binding"/>
    <property type="evidence" value="ECO:0007669"/>
    <property type="project" value="InterPro"/>
</dbReference>
<dbReference type="GO" id="GO:0015031">
    <property type="term" value="P:protein transport"/>
    <property type="evidence" value="ECO:0007669"/>
    <property type="project" value="UniProtKB-KW"/>
</dbReference>
<dbReference type="CDD" id="cd00054">
    <property type="entry name" value="EGF_CA"/>
    <property type="match status" value="1"/>
</dbReference>
<dbReference type="FunFam" id="3.50.30.30:FF:000001">
    <property type="entry name" value="Vacuolar-sorting receptor 1"/>
    <property type="match status" value="1"/>
</dbReference>
<dbReference type="FunFam" id="2.10.25.10:FF:000178">
    <property type="entry name" value="vacuolar-sorting receptor 1"/>
    <property type="match status" value="1"/>
</dbReference>
<dbReference type="Gene3D" id="3.50.30.30">
    <property type="match status" value="1"/>
</dbReference>
<dbReference type="Gene3D" id="2.10.25.10">
    <property type="entry name" value="Laminin"/>
    <property type="match status" value="2"/>
</dbReference>
<dbReference type="InterPro" id="IPR001881">
    <property type="entry name" value="EGF-like_Ca-bd_dom"/>
</dbReference>
<dbReference type="InterPro" id="IPR018097">
    <property type="entry name" value="EGF_Ca-bd_CS"/>
</dbReference>
<dbReference type="InterPro" id="IPR046450">
    <property type="entry name" value="PA_dom_sf"/>
</dbReference>
<dbReference type="InterPro" id="IPR003137">
    <property type="entry name" value="PA_domain"/>
</dbReference>
<dbReference type="InterPro" id="IPR056858">
    <property type="entry name" value="VSR_TRX"/>
</dbReference>
<dbReference type="PANTHER" id="PTHR22702">
    <property type="entry name" value="PROTEASE-ASSOCIATED DOMAIN-CONTAINING PROTEIN"/>
    <property type="match status" value="1"/>
</dbReference>
<dbReference type="PANTHER" id="PTHR22702:SF1">
    <property type="entry name" value="PROTEASE-ASSOCIATED DOMAIN-CONTAINING PROTEIN 1"/>
    <property type="match status" value="1"/>
</dbReference>
<dbReference type="Pfam" id="PF02225">
    <property type="entry name" value="PA"/>
    <property type="match status" value="1"/>
</dbReference>
<dbReference type="Pfam" id="PF25011">
    <property type="entry name" value="VSR_TRX"/>
    <property type="match status" value="1"/>
</dbReference>
<dbReference type="SMART" id="SM00179">
    <property type="entry name" value="EGF_CA"/>
    <property type="match status" value="1"/>
</dbReference>
<dbReference type="SUPFAM" id="SSF52025">
    <property type="entry name" value="PA domain"/>
    <property type="match status" value="1"/>
</dbReference>
<dbReference type="PROSITE" id="PS00010">
    <property type="entry name" value="ASX_HYDROXYL"/>
    <property type="match status" value="1"/>
</dbReference>
<dbReference type="PROSITE" id="PS01186">
    <property type="entry name" value="EGF_2"/>
    <property type="match status" value="1"/>
</dbReference>
<dbReference type="PROSITE" id="PS01187">
    <property type="entry name" value="EGF_CA"/>
    <property type="match status" value="1"/>
</dbReference>
<organism>
    <name type="scientific">Arabidopsis thaliana</name>
    <name type="common">Mouse-ear cress</name>
    <dbReference type="NCBI Taxonomy" id="3702"/>
    <lineage>
        <taxon>Eukaryota</taxon>
        <taxon>Viridiplantae</taxon>
        <taxon>Streptophyta</taxon>
        <taxon>Embryophyta</taxon>
        <taxon>Tracheophyta</taxon>
        <taxon>Spermatophyta</taxon>
        <taxon>Magnoliopsida</taxon>
        <taxon>eudicotyledons</taxon>
        <taxon>Gunneridae</taxon>
        <taxon>Pentapetalae</taxon>
        <taxon>rosids</taxon>
        <taxon>malvids</taxon>
        <taxon>Brassicales</taxon>
        <taxon>Brassicaceae</taxon>
        <taxon>Camelineae</taxon>
        <taxon>Arabidopsis</taxon>
    </lineage>
</organism>
<protein>
    <recommendedName>
        <fullName evidence="5">Vacuolar-sorting receptor 2</fullName>
        <shortName evidence="5">AtVSR2</shortName>
    </recommendedName>
    <alternativeName>
        <fullName evidence="4">BP80-like protein c</fullName>
        <shortName evidence="4">AtBP80c</shortName>
    </alternativeName>
    <alternativeName>
        <fullName evidence="4">Epidermal growth factor receptor-like protein 4</fullName>
        <shortName evidence="4">AtELP4</shortName>
    </alternativeName>
</protein>
<evidence type="ECO:0000250" key="1"/>
<evidence type="ECO:0000255" key="2"/>
<evidence type="ECO:0000269" key="3">
    <source>
    </source>
</evidence>
<evidence type="ECO:0000303" key="4">
    <source>
    </source>
</evidence>
<evidence type="ECO:0000303" key="5">
    <source>
    </source>
</evidence>
<evidence type="ECO:0000305" key="6"/>
<evidence type="ECO:0000312" key="7">
    <source>
        <dbReference type="Araport" id="AT2G30290"/>
    </source>
</evidence>
<evidence type="ECO:0000312" key="8">
    <source>
        <dbReference type="EMBL" id="AAC16948.1"/>
    </source>
</evidence>
<feature type="signal peptide" evidence="2">
    <location>
        <begin position="1"/>
        <end position="19"/>
    </location>
</feature>
<feature type="chain" id="PRO_0000036464" description="Vacuolar-sorting receptor 2">
    <location>
        <begin position="20"/>
        <end position="625"/>
    </location>
</feature>
<feature type="topological domain" description="Lumenal" evidence="2">
    <location>
        <begin position="20"/>
        <end position="567"/>
    </location>
</feature>
<feature type="transmembrane region" description="Helical" evidence="2">
    <location>
        <begin position="568"/>
        <end position="588"/>
    </location>
</feature>
<feature type="topological domain" description="Cytoplasmic" evidence="2">
    <location>
        <begin position="589"/>
        <end position="625"/>
    </location>
</feature>
<feature type="domain" description="PA">
    <location>
        <begin position="55"/>
        <end position="167"/>
    </location>
</feature>
<feature type="domain" description="EGF-like 1">
    <location>
        <begin position="415"/>
        <end position="465"/>
    </location>
</feature>
<feature type="domain" description="EGF-like 2">
    <location>
        <begin position="468"/>
        <end position="515"/>
    </location>
</feature>
<feature type="domain" description="EGF-like 3; calcium-binding" evidence="2">
    <location>
        <begin position="516"/>
        <end position="558"/>
    </location>
</feature>
<feature type="short sequence motif" description="Tyrosine-based internalization motif" evidence="1">
    <location>
        <begin position="608"/>
        <end position="611"/>
    </location>
</feature>
<feature type="glycosylation site" description="N-linked (GlcNAc...) asparagine" evidence="2">
    <location>
        <position position="147"/>
    </location>
</feature>
<feature type="glycosylation site" description="N-linked (GlcNAc...) asparagine" evidence="2">
    <location>
        <position position="293"/>
    </location>
</feature>
<feature type="glycosylation site" description="N-linked (GlcNAc...) asparagine" evidence="2">
    <location>
        <position position="433"/>
    </location>
</feature>
<feature type="disulfide bond" evidence="1">
    <location>
        <begin position="419"/>
        <end position="437"/>
    </location>
</feature>
<feature type="disulfide bond" evidence="1">
    <location>
        <begin position="426"/>
        <end position="446"/>
    </location>
</feature>
<feature type="disulfide bond" evidence="1">
    <location>
        <begin position="448"/>
        <end position="464"/>
    </location>
</feature>
<feature type="disulfide bond" evidence="1">
    <location>
        <begin position="472"/>
        <end position="492"/>
    </location>
</feature>
<feature type="disulfide bond" evidence="1">
    <location>
        <begin position="479"/>
        <end position="500"/>
    </location>
</feature>
<feature type="disulfide bond" evidence="1">
    <location>
        <begin position="502"/>
        <end position="514"/>
    </location>
</feature>
<feature type="disulfide bond" evidence="1">
    <location>
        <begin position="544"/>
        <end position="557"/>
    </location>
</feature>